<feature type="chain" id="PRO_1000078251" description="Nicotinate-nucleotide--dimethylbenzimidazole phosphoribosyltransferase">
    <location>
        <begin position="1"/>
        <end position="342"/>
    </location>
</feature>
<feature type="active site" description="Proton acceptor" evidence="1">
    <location>
        <position position="311"/>
    </location>
</feature>
<sequence>MFNISPANHEFDDEIQSKIDNKTKPLGALGELENLAKQLALVLGKDKPEIINPKLLVFAADHGIASSGVSIAPSEVTTQMVMNFVAGGAAINVFCRQVGLDMEVIDCGILQPLEGVEGVIDQRLGAGTGAIHKQAAMTLGAVKQGLEMARTRIELHHQQGCNLIALGEMGIGNTSSAAAIMATVMGMKGVDCVGRGTGIDAATLKRKQMLVEQALHIHEAELTDPYNILACLGGFEIVQMTGAMLAAAERNMLVIVDGFIATAAAMVAVQINANVRDYMIFGHQSDERGHCLMMEHLQARPLLRLGMRLGEGSGAVLALPLIRAAAGFYNEMASFSDAGIEI</sequence>
<comment type="function">
    <text evidence="1">Catalyzes the synthesis of alpha-ribazole-5'-phosphate from nicotinate mononucleotide (NAMN) and 5,6-dimethylbenzimidazole (DMB).</text>
</comment>
<comment type="catalytic activity">
    <reaction evidence="1">
        <text>5,6-dimethylbenzimidazole + nicotinate beta-D-ribonucleotide = alpha-ribazole 5'-phosphate + nicotinate + H(+)</text>
        <dbReference type="Rhea" id="RHEA:11196"/>
        <dbReference type="ChEBI" id="CHEBI:15378"/>
        <dbReference type="ChEBI" id="CHEBI:15890"/>
        <dbReference type="ChEBI" id="CHEBI:32544"/>
        <dbReference type="ChEBI" id="CHEBI:57502"/>
        <dbReference type="ChEBI" id="CHEBI:57918"/>
        <dbReference type="EC" id="2.4.2.21"/>
    </reaction>
</comment>
<comment type="pathway">
    <text evidence="1">Nucleoside biosynthesis; alpha-ribazole biosynthesis; alpha-ribazole from 5,6-dimethylbenzimidazole: step 1/2.</text>
</comment>
<comment type="similarity">
    <text evidence="1">Belongs to the CobT family.</text>
</comment>
<name>COBT_SHESH</name>
<organism>
    <name type="scientific">Shewanella sediminis (strain HAW-EB3)</name>
    <dbReference type="NCBI Taxonomy" id="425104"/>
    <lineage>
        <taxon>Bacteria</taxon>
        <taxon>Pseudomonadati</taxon>
        <taxon>Pseudomonadota</taxon>
        <taxon>Gammaproteobacteria</taxon>
        <taxon>Alteromonadales</taxon>
        <taxon>Shewanellaceae</taxon>
        <taxon>Shewanella</taxon>
    </lineage>
</organism>
<accession>A8FZR5</accession>
<keyword id="KW-0169">Cobalamin biosynthesis</keyword>
<keyword id="KW-0328">Glycosyltransferase</keyword>
<keyword id="KW-1185">Reference proteome</keyword>
<keyword id="KW-0808">Transferase</keyword>
<dbReference type="EC" id="2.4.2.21" evidence="1"/>
<dbReference type="EMBL" id="CP000821">
    <property type="protein sequence ID" value="ABV38338.1"/>
    <property type="molecule type" value="Genomic_DNA"/>
</dbReference>
<dbReference type="RefSeq" id="WP_012144068.1">
    <property type="nucleotide sequence ID" value="NC_009831.1"/>
</dbReference>
<dbReference type="SMR" id="A8FZR5"/>
<dbReference type="STRING" id="425104.Ssed_3734"/>
<dbReference type="KEGG" id="sse:Ssed_3734"/>
<dbReference type="eggNOG" id="COG2038">
    <property type="taxonomic scope" value="Bacteria"/>
</dbReference>
<dbReference type="HOGENOM" id="CLU_002982_0_0_6"/>
<dbReference type="OrthoDB" id="9781491at2"/>
<dbReference type="UniPathway" id="UPA00061">
    <property type="reaction ID" value="UER00516"/>
</dbReference>
<dbReference type="Proteomes" id="UP000002015">
    <property type="component" value="Chromosome"/>
</dbReference>
<dbReference type="GO" id="GO:0008939">
    <property type="term" value="F:nicotinate-nucleotide-dimethylbenzimidazole phosphoribosyltransferase activity"/>
    <property type="evidence" value="ECO:0007669"/>
    <property type="project" value="UniProtKB-UniRule"/>
</dbReference>
<dbReference type="GO" id="GO:0009236">
    <property type="term" value="P:cobalamin biosynthetic process"/>
    <property type="evidence" value="ECO:0007669"/>
    <property type="project" value="UniProtKB-KW"/>
</dbReference>
<dbReference type="CDD" id="cd02439">
    <property type="entry name" value="DMB-PRT_CobT"/>
    <property type="match status" value="1"/>
</dbReference>
<dbReference type="FunFam" id="3.40.50.10210:FF:000001">
    <property type="entry name" value="Nicotinate-nucleotide--dimethylbenzimidazole phosphoribosyltransferase"/>
    <property type="match status" value="1"/>
</dbReference>
<dbReference type="Gene3D" id="1.10.1610.10">
    <property type="match status" value="1"/>
</dbReference>
<dbReference type="Gene3D" id="3.40.50.10210">
    <property type="match status" value="1"/>
</dbReference>
<dbReference type="HAMAP" id="MF_00230">
    <property type="entry name" value="CobT"/>
    <property type="match status" value="1"/>
</dbReference>
<dbReference type="InterPro" id="IPR003200">
    <property type="entry name" value="Nict_dMeBzImd_PRibTrfase"/>
</dbReference>
<dbReference type="InterPro" id="IPR017846">
    <property type="entry name" value="Nict_dMeBzImd_PRibTrfase_bact"/>
</dbReference>
<dbReference type="InterPro" id="IPR023195">
    <property type="entry name" value="Nict_dMeBzImd_PRibTrfase_N"/>
</dbReference>
<dbReference type="InterPro" id="IPR036087">
    <property type="entry name" value="Nict_dMeBzImd_PRibTrfase_sf"/>
</dbReference>
<dbReference type="NCBIfam" id="TIGR03160">
    <property type="entry name" value="cobT_DBIPRT"/>
    <property type="match status" value="1"/>
</dbReference>
<dbReference type="NCBIfam" id="NF000996">
    <property type="entry name" value="PRK00105.1"/>
    <property type="match status" value="1"/>
</dbReference>
<dbReference type="PANTHER" id="PTHR43463">
    <property type="entry name" value="NICOTINATE-NUCLEOTIDE--DIMETHYLBENZIMIDAZOLE PHOSPHORIBOSYLTRANSFERASE"/>
    <property type="match status" value="1"/>
</dbReference>
<dbReference type="PANTHER" id="PTHR43463:SF1">
    <property type="entry name" value="NICOTINATE-NUCLEOTIDE--DIMETHYLBENZIMIDAZOLE PHOSPHORIBOSYLTRANSFERASE"/>
    <property type="match status" value="1"/>
</dbReference>
<dbReference type="Pfam" id="PF02277">
    <property type="entry name" value="DBI_PRT"/>
    <property type="match status" value="1"/>
</dbReference>
<dbReference type="SUPFAM" id="SSF52733">
    <property type="entry name" value="Nicotinate mononucleotide:5,6-dimethylbenzimidazole phosphoribosyltransferase (CobT)"/>
    <property type="match status" value="1"/>
</dbReference>
<reference key="1">
    <citation type="submission" date="2007-08" db="EMBL/GenBank/DDBJ databases">
        <title>Complete sequence of Shewanella sediminis HAW-EB3.</title>
        <authorList>
            <consortium name="US DOE Joint Genome Institute"/>
            <person name="Copeland A."/>
            <person name="Lucas S."/>
            <person name="Lapidus A."/>
            <person name="Barry K."/>
            <person name="Glavina del Rio T."/>
            <person name="Dalin E."/>
            <person name="Tice H."/>
            <person name="Pitluck S."/>
            <person name="Chertkov O."/>
            <person name="Brettin T."/>
            <person name="Bruce D."/>
            <person name="Detter J.C."/>
            <person name="Han C."/>
            <person name="Schmutz J."/>
            <person name="Larimer F."/>
            <person name="Land M."/>
            <person name="Hauser L."/>
            <person name="Kyrpides N."/>
            <person name="Kim E."/>
            <person name="Zhao J.-S."/>
            <person name="Richardson P."/>
        </authorList>
    </citation>
    <scope>NUCLEOTIDE SEQUENCE [LARGE SCALE GENOMIC DNA]</scope>
    <source>
        <strain>HAW-EB3</strain>
    </source>
</reference>
<evidence type="ECO:0000255" key="1">
    <source>
        <dbReference type="HAMAP-Rule" id="MF_00230"/>
    </source>
</evidence>
<proteinExistence type="inferred from homology"/>
<protein>
    <recommendedName>
        <fullName evidence="1">Nicotinate-nucleotide--dimethylbenzimidazole phosphoribosyltransferase</fullName>
        <shortName evidence="1">NN:DBI PRT</shortName>
        <ecNumber evidence="1">2.4.2.21</ecNumber>
    </recommendedName>
    <alternativeName>
        <fullName evidence="1">N(1)-alpha-phosphoribosyltransferase</fullName>
    </alternativeName>
</protein>
<gene>
    <name evidence="1" type="primary">cobT</name>
    <name type="ordered locus">Ssed_3734</name>
</gene>